<name>GET3_EREGS</name>
<organism>
    <name type="scientific">Eremothecium gossypii (strain ATCC 10895 / CBS 109.51 / FGSC 9923 / NRRL Y-1056)</name>
    <name type="common">Yeast</name>
    <name type="synonym">Ashbya gossypii</name>
    <dbReference type="NCBI Taxonomy" id="284811"/>
    <lineage>
        <taxon>Eukaryota</taxon>
        <taxon>Fungi</taxon>
        <taxon>Dikarya</taxon>
        <taxon>Ascomycota</taxon>
        <taxon>Saccharomycotina</taxon>
        <taxon>Saccharomycetes</taxon>
        <taxon>Saccharomycetales</taxon>
        <taxon>Saccharomycetaceae</taxon>
        <taxon>Eremothecium</taxon>
    </lineage>
</organism>
<sequence>MTDITPEASLRSLINSTTHKWIFVGGKGGVGKTTSSCSIAIQMALAQPTKQFLLISTDPAHNLSDAFNEKFGKDARKVTGMDNLSCMEIDPSAALKDVNDMAIANGGDDDGLSGLLQGGALADLTGSIPGIDEALSFMEVMKHIKKQEQGDGEHFDTVIFDTAPTGHTLRFLQLPTTLTKVLDKFGAIAGRLGPMLNSFAGNPNVDVLGKMNELKESVQKIKKQFTDPDLTTFVCVCISEFLSLYETERLIQELISYDMDVNSIIVNQLLFAESDKEHNCKRCQARWKMQKKYLSQIDELYEDFHIVKMPLCAGEIRGLENLKKFSCFLNNKYDPETDGELVYQLEQGL</sequence>
<protein>
    <recommendedName>
        <fullName evidence="1">ATPase GET3</fullName>
        <ecNumber evidence="1">3.6.-.-</ecNumber>
    </recommendedName>
    <alternativeName>
        <fullName evidence="1">Arsenical pump-driving ATPase</fullName>
    </alternativeName>
    <alternativeName>
        <fullName evidence="1">Arsenite-stimulated ATPase</fullName>
    </alternativeName>
    <alternativeName>
        <fullName evidence="1">Golgi to ER traffic protein 3</fullName>
    </alternativeName>
    <alternativeName>
        <fullName evidence="1">Guided entry of tail-anchored proteins 3</fullName>
    </alternativeName>
</protein>
<dbReference type="EC" id="3.6.-.-" evidence="1"/>
<dbReference type="EMBL" id="AE016817">
    <property type="protein sequence ID" value="AAS52205.2"/>
    <property type="molecule type" value="Genomic_DNA"/>
</dbReference>
<dbReference type="RefSeq" id="NP_984381.2">
    <property type="nucleotide sequence ID" value="NM_209734.2"/>
</dbReference>
<dbReference type="SMR" id="Q759J2"/>
<dbReference type="FunCoup" id="Q759J2">
    <property type="interactions" value="1030"/>
</dbReference>
<dbReference type="STRING" id="284811.Q759J2"/>
<dbReference type="EnsemblFungi" id="AAS52205">
    <property type="protein sequence ID" value="AAS52205"/>
    <property type="gene ID" value="AGOS_ADR285W"/>
</dbReference>
<dbReference type="GeneID" id="4620543"/>
<dbReference type="KEGG" id="ago:AGOS_ADR285W"/>
<dbReference type="eggNOG" id="KOG2825">
    <property type="taxonomic scope" value="Eukaryota"/>
</dbReference>
<dbReference type="HOGENOM" id="CLU_040761_0_0_1"/>
<dbReference type="InParanoid" id="Q759J2"/>
<dbReference type="OMA" id="MDAPYEF"/>
<dbReference type="OrthoDB" id="1770at2759"/>
<dbReference type="Proteomes" id="UP000000591">
    <property type="component" value="Chromosome IV"/>
</dbReference>
<dbReference type="GO" id="GO:0043529">
    <property type="term" value="C:GET complex"/>
    <property type="evidence" value="ECO:0000318"/>
    <property type="project" value="GO_Central"/>
</dbReference>
<dbReference type="GO" id="GO:0005794">
    <property type="term" value="C:Golgi apparatus"/>
    <property type="evidence" value="ECO:0007669"/>
    <property type="project" value="UniProtKB-SubCell"/>
</dbReference>
<dbReference type="GO" id="GO:0005524">
    <property type="term" value="F:ATP binding"/>
    <property type="evidence" value="ECO:0007669"/>
    <property type="project" value="UniProtKB-UniRule"/>
</dbReference>
<dbReference type="GO" id="GO:0016887">
    <property type="term" value="F:ATP hydrolysis activity"/>
    <property type="evidence" value="ECO:0000318"/>
    <property type="project" value="GO_Central"/>
</dbReference>
<dbReference type="GO" id="GO:0005085">
    <property type="term" value="F:guanyl-nucleotide exchange factor activity"/>
    <property type="evidence" value="ECO:0007669"/>
    <property type="project" value="EnsemblFungi"/>
</dbReference>
<dbReference type="GO" id="GO:0042802">
    <property type="term" value="F:identical protein binding"/>
    <property type="evidence" value="ECO:0007669"/>
    <property type="project" value="EnsemblFungi"/>
</dbReference>
<dbReference type="GO" id="GO:0046872">
    <property type="term" value="F:metal ion binding"/>
    <property type="evidence" value="ECO:0007669"/>
    <property type="project" value="UniProtKB-KW"/>
</dbReference>
<dbReference type="GO" id="GO:0044183">
    <property type="term" value="F:protein folding chaperone"/>
    <property type="evidence" value="ECO:0007669"/>
    <property type="project" value="EnsemblFungi"/>
</dbReference>
<dbReference type="GO" id="GO:0051082">
    <property type="term" value="F:unfolded protein binding"/>
    <property type="evidence" value="ECO:0007669"/>
    <property type="project" value="EnsemblFungi"/>
</dbReference>
<dbReference type="GO" id="GO:0034599">
    <property type="term" value="P:cellular response to oxidative stress"/>
    <property type="evidence" value="ECO:0007669"/>
    <property type="project" value="EnsemblFungi"/>
</dbReference>
<dbReference type="GO" id="GO:0000750">
    <property type="term" value="P:pheromone-dependent signal transduction involved in conjugation with cellular fusion"/>
    <property type="evidence" value="ECO:0007669"/>
    <property type="project" value="EnsemblFungi"/>
</dbReference>
<dbReference type="GO" id="GO:0006620">
    <property type="term" value="P:post-translational protein targeting to endoplasmic reticulum membrane"/>
    <property type="evidence" value="ECO:0007669"/>
    <property type="project" value="EnsemblFungi"/>
</dbReference>
<dbReference type="GO" id="GO:0009408">
    <property type="term" value="P:response to heat"/>
    <property type="evidence" value="ECO:0007669"/>
    <property type="project" value="EnsemblFungi"/>
</dbReference>
<dbReference type="GO" id="GO:0010038">
    <property type="term" value="P:response to metal ion"/>
    <property type="evidence" value="ECO:0007669"/>
    <property type="project" value="EnsemblFungi"/>
</dbReference>
<dbReference type="GO" id="GO:0006890">
    <property type="term" value="P:retrograde vesicle-mediated transport, Golgi to endoplasmic reticulum"/>
    <property type="evidence" value="ECO:0007669"/>
    <property type="project" value="EnsemblFungi"/>
</dbReference>
<dbReference type="GO" id="GO:0071816">
    <property type="term" value="P:tail-anchored membrane protein insertion into ER membrane"/>
    <property type="evidence" value="ECO:0000318"/>
    <property type="project" value="GO_Central"/>
</dbReference>
<dbReference type="CDD" id="cd02035">
    <property type="entry name" value="ArsA"/>
    <property type="match status" value="1"/>
</dbReference>
<dbReference type="FunFam" id="3.40.50.300:FF:001359">
    <property type="entry name" value="ATPase GET3"/>
    <property type="match status" value="1"/>
</dbReference>
<dbReference type="Gene3D" id="3.40.50.300">
    <property type="entry name" value="P-loop containing nucleotide triphosphate hydrolases"/>
    <property type="match status" value="1"/>
</dbReference>
<dbReference type="HAMAP" id="MF_03112">
    <property type="entry name" value="Asna1_Get3"/>
    <property type="match status" value="1"/>
</dbReference>
<dbReference type="InterPro" id="IPR025723">
    <property type="entry name" value="Anion-transp_ATPase-like_dom"/>
</dbReference>
<dbReference type="InterPro" id="IPR016300">
    <property type="entry name" value="ATPase_ArsA/GET3"/>
</dbReference>
<dbReference type="InterPro" id="IPR027542">
    <property type="entry name" value="ATPase_ArsA/GET3_euk"/>
</dbReference>
<dbReference type="InterPro" id="IPR027417">
    <property type="entry name" value="P-loop_NTPase"/>
</dbReference>
<dbReference type="NCBIfam" id="TIGR00345">
    <property type="entry name" value="GET3_arsA_TRC40"/>
    <property type="match status" value="1"/>
</dbReference>
<dbReference type="PANTHER" id="PTHR10803">
    <property type="entry name" value="ARSENICAL PUMP-DRIVING ATPASE ARSENITE-TRANSLOCATING ATPASE"/>
    <property type="match status" value="1"/>
</dbReference>
<dbReference type="PANTHER" id="PTHR10803:SF3">
    <property type="entry name" value="ATPASE GET3"/>
    <property type="match status" value="1"/>
</dbReference>
<dbReference type="Pfam" id="PF02374">
    <property type="entry name" value="ArsA_ATPase"/>
    <property type="match status" value="1"/>
</dbReference>
<dbReference type="SUPFAM" id="SSF52540">
    <property type="entry name" value="P-loop containing nucleoside triphosphate hydrolases"/>
    <property type="match status" value="1"/>
</dbReference>
<evidence type="ECO:0000255" key="1">
    <source>
        <dbReference type="HAMAP-Rule" id="MF_03112"/>
    </source>
</evidence>
<feature type="chain" id="PRO_0000388186" description="ATPase GET3">
    <location>
        <begin position="1"/>
        <end position="349"/>
    </location>
</feature>
<feature type="active site" evidence="1">
    <location>
        <position position="58"/>
    </location>
</feature>
<feature type="binding site" evidence="1">
    <location>
        <begin position="27"/>
        <end position="34"/>
    </location>
    <ligand>
        <name>ATP</name>
        <dbReference type="ChEBI" id="CHEBI:30616"/>
    </ligand>
</feature>
<feature type="binding site" evidence="1">
    <location>
        <position position="240"/>
    </location>
    <ligand>
        <name>ATP</name>
        <dbReference type="ChEBI" id="CHEBI:30616"/>
    </ligand>
</feature>
<feature type="binding site" evidence="1">
    <location>
        <position position="267"/>
    </location>
    <ligand>
        <name>ATP</name>
        <dbReference type="ChEBI" id="CHEBI:30616"/>
    </ligand>
</feature>
<feature type="binding site" evidence="1">
    <location>
        <position position="280"/>
    </location>
    <ligand>
        <name>Zn(2+)</name>
        <dbReference type="ChEBI" id="CHEBI:29105"/>
        <note>ligand shared between dimeric partners</note>
    </ligand>
</feature>
<feature type="binding site" evidence="1">
    <location>
        <position position="283"/>
    </location>
    <ligand>
        <name>Zn(2+)</name>
        <dbReference type="ChEBI" id="CHEBI:29105"/>
        <note>ligand shared between dimeric partners</note>
    </ligand>
</feature>
<accession>Q759J2</accession>
<proteinExistence type="inferred from homology"/>
<gene>
    <name evidence="1" type="primary">GET3</name>
    <name type="ordered locus">ADR285W</name>
</gene>
<keyword id="KW-0067">ATP-binding</keyword>
<keyword id="KW-0963">Cytoplasm</keyword>
<keyword id="KW-0256">Endoplasmic reticulum</keyword>
<keyword id="KW-0333">Golgi apparatus</keyword>
<keyword id="KW-0378">Hydrolase</keyword>
<keyword id="KW-0479">Metal-binding</keyword>
<keyword id="KW-0547">Nucleotide-binding</keyword>
<keyword id="KW-1185">Reference proteome</keyword>
<keyword id="KW-0813">Transport</keyword>
<keyword id="KW-0862">Zinc</keyword>
<reference key="1">
    <citation type="journal article" date="2004" name="Science">
        <title>The Ashbya gossypii genome as a tool for mapping the ancient Saccharomyces cerevisiae genome.</title>
        <authorList>
            <person name="Dietrich F.S."/>
            <person name="Voegeli S."/>
            <person name="Brachat S."/>
            <person name="Lerch A."/>
            <person name="Gates K."/>
            <person name="Steiner S."/>
            <person name="Mohr C."/>
            <person name="Poehlmann R."/>
            <person name="Luedi P."/>
            <person name="Choi S."/>
            <person name="Wing R.A."/>
            <person name="Flavier A."/>
            <person name="Gaffney T.D."/>
            <person name="Philippsen P."/>
        </authorList>
    </citation>
    <scope>NUCLEOTIDE SEQUENCE [LARGE SCALE GENOMIC DNA]</scope>
    <source>
        <strain>ATCC 10895 / CBS 109.51 / FGSC 9923 / NRRL Y-1056</strain>
    </source>
</reference>
<reference key="2">
    <citation type="journal article" date="2013" name="G3 (Bethesda)">
        <title>Genomes of Ashbya fungi isolated from insects reveal four mating-type loci, numerous translocations, lack of transposons, and distinct gene duplications.</title>
        <authorList>
            <person name="Dietrich F.S."/>
            <person name="Voegeli S."/>
            <person name="Kuo S."/>
            <person name="Philippsen P."/>
        </authorList>
    </citation>
    <scope>GENOME REANNOTATION</scope>
    <scope>SEQUENCE REVISION TO 281 AND 293</scope>
    <source>
        <strain>ATCC 10895 / CBS 109.51 / FGSC 9923 / NRRL Y-1056</strain>
    </source>
</reference>
<comment type="function">
    <text evidence="1">ATPase required for the post-translational delivery of tail-anchored (TA) proteins to the endoplasmic reticulum. Recognizes and selectively binds the transmembrane domain of TA proteins in the cytosol. This complex then targets to the endoplasmic reticulum by membrane-bound receptors GET1 and GET2, where the tail-anchored protein is released for insertion. This process is regulated by ATP binding and hydrolysis. ATP binding drives the homodimer towards the closed dimer state, facilitating recognition of newly synthesized TA membrane proteins. ATP hydrolysis is required for insertion. Subsequently, the homodimer reverts towards the open dimer state, lowering its affinity for the GET1-GET2 receptor, and returning it to the cytosol to initiate a new round of targeting. Cooperates with the HDEL receptor ERD2 to mediate the ATP-dependent retrieval of resident ER proteins that contain a C-terminal H-D-E-L retention signal from the Golgi to the ER. Involved in low-level resistance to the oxyanions arsenite and arsenate, and in heat tolerance.</text>
</comment>
<comment type="subunit">
    <text evidence="1">Homodimer. Component of the Golgi to ER traffic (GET) complex, which is composed of GET1, GET2 and GET3. Within the complex, GET1 and GET2 form a heterotetramer which is stabilized by phosphatidylinositol binding and which binds to the GET3 homodimer. Interacts with the chloride channel protein GEF1.</text>
</comment>
<comment type="subcellular location">
    <subcellularLocation>
        <location evidence="1">Cytoplasm</location>
    </subcellularLocation>
    <subcellularLocation>
        <location evidence="1">Endoplasmic reticulum</location>
    </subcellularLocation>
    <subcellularLocation>
        <location evidence="1">Golgi apparatus</location>
    </subcellularLocation>
    <text evidence="1">GET1 and GET2 are required for targeting GET3 to the endoplasmic reticulum.</text>
</comment>
<comment type="similarity">
    <text evidence="1">Belongs to the arsA ATPase family.</text>
</comment>